<accession>Q5RKG6</accession>
<accession>Q4VBW2</accession>
<comment type="function">
    <text evidence="3">E3 ubiquitin-protein ligase that participates in multiple biological processes including cell death, glucose metabolism, and in particular, the innate immune response. Mediates 'Lys-63'-linked polyubiquitination of TRAF3 thereby promoting type I interferon production via RIG-I signaling pathway. Can also catalyze 'Lys-48'-linked polyubiquitination and proteasomal degradation of viral proteins such as influenza virus PB2. Acts as a negative feedback regulator of TLR7- and TLR9-triggered signaling. Mechanistically, promotes the 'Lys-48'-linked ubiquitination of IRF7 and induces its degradation via a proteasome-dependent pathway. Reduces FGFR1-dependent tyrosine phosphorylation of PKM, inhibiting PKM-dependent lactate production, glucose metabolism, and cell growth.</text>
</comment>
<comment type="catalytic activity">
    <reaction>
        <text>S-ubiquitinyl-[E2 ubiquitin-conjugating enzyme]-L-cysteine + [acceptor protein]-L-lysine = [E2 ubiquitin-conjugating enzyme]-L-cysteine + N(6)-ubiquitinyl-[acceptor protein]-L-lysine.</text>
        <dbReference type="EC" id="2.3.2.27"/>
    </reaction>
</comment>
<comment type="pathway">
    <text>Protein modification; protein ubiquitination.</text>
</comment>
<comment type="subunit">
    <text evidence="3">Interacts with PKM isoform M2, but not isoform M1; this interaction may compete with that between PKM and FGFR1, and hence reduces FGFR1-dependent tyrosine phosphorylation of PKM. Interacts with IRF7; this interaction promotes IRF7 proteasomal degradation. Interacts with TRAF3; this interaction promotes TRAF3 activation.</text>
</comment>
<comment type="subcellular location">
    <subcellularLocation>
        <location evidence="2">Cytoplasm</location>
    </subcellularLocation>
    <subcellularLocation>
        <location evidence="2">Nucleus</location>
    </subcellularLocation>
    <text evidence="2">Found predominantly in cytoplasm with a granular distribution. Found in punctuate nuclear bodies.</text>
</comment>
<comment type="domain">
    <text evidence="1">The RING finger domain and the coiled-coil region are required for the apoptosis-inducing activity.</text>
</comment>
<sequence length="501" mass="57304">MEPGPSVSPGPSRSFKEELLCAVCYDPFRDAVTLRCGHNFCRRCVSGCWEVQTTPSCPVCKERAVPGELRTNHTLNNLVETLLREEAEGARWTGRRSPRPCRAHRAPLTLFCVEDKELLCCACQADARHQEHRVQPIKDTAQDFRAKCKNMEHVLREKAKSFWALRRTYEAIAKHNEVQTTWLEGRIRDEFDKLRDFLRVEEQATVDAMKEESRKKHLLAEEKMKQLAEQTEALAREIERLQMEMKEDDMTFLMKHKSRKRRLFCTVEPAPLQPGLLMDACKYLESLQYRVWKKMLGSVESVPFSLDPNTAAGWLKVADDLTSVINHGYRVQVENPERFSSAPCLLGSQVFSKGSHSWEVDVGGLPSWRVGVVRVQAHAQAQAQADVGGEGHSHSCYHDTRSGFWYLCRTQGVDGDHCMTSDTATAPLVQAMPRRLRVELECEEGELSFYDSERHCHLYTFHAHFGEVRPYFYLGASRGDGPPEPLRICHLRVSIKEELDI</sequence>
<organism>
    <name type="scientific">Rattus norvegicus</name>
    <name type="common">Rat</name>
    <dbReference type="NCBI Taxonomy" id="10116"/>
    <lineage>
        <taxon>Eukaryota</taxon>
        <taxon>Metazoa</taxon>
        <taxon>Chordata</taxon>
        <taxon>Craniata</taxon>
        <taxon>Vertebrata</taxon>
        <taxon>Euteleostomi</taxon>
        <taxon>Mammalia</taxon>
        <taxon>Eutheria</taxon>
        <taxon>Euarchontoglires</taxon>
        <taxon>Glires</taxon>
        <taxon>Rodentia</taxon>
        <taxon>Myomorpha</taxon>
        <taxon>Muroidea</taxon>
        <taxon>Muridae</taxon>
        <taxon>Murinae</taxon>
        <taxon>Rattus</taxon>
    </lineage>
</organism>
<proteinExistence type="evidence at transcript level"/>
<gene>
    <name type="primary">Trim35</name>
</gene>
<dbReference type="EC" id="2.3.2.27"/>
<dbReference type="EMBL" id="BC085942">
    <property type="protein sequence ID" value="AAH85942.1"/>
    <property type="molecule type" value="mRNA"/>
</dbReference>
<dbReference type="EMBL" id="BC094955">
    <property type="protein sequence ID" value="AAH94955.1"/>
    <property type="molecule type" value="mRNA"/>
</dbReference>
<dbReference type="RefSeq" id="NP_001020313.2">
    <property type="nucleotide sequence ID" value="NM_001025142.2"/>
</dbReference>
<dbReference type="SMR" id="Q5RKG6"/>
<dbReference type="FunCoup" id="Q5RKG6">
    <property type="interactions" value="498"/>
</dbReference>
<dbReference type="STRING" id="10116.ENSRNOP00000012528"/>
<dbReference type="PhosphoSitePlus" id="Q5RKG6"/>
<dbReference type="PaxDb" id="10116-ENSRNOP00000012528"/>
<dbReference type="GeneID" id="498538"/>
<dbReference type="KEGG" id="rno:498538"/>
<dbReference type="UCSC" id="RGD:1564642">
    <property type="organism name" value="rat"/>
</dbReference>
<dbReference type="AGR" id="RGD:1564642"/>
<dbReference type="CTD" id="23087"/>
<dbReference type="RGD" id="1564642">
    <property type="gene designation" value="Trim35"/>
</dbReference>
<dbReference type="eggNOG" id="KOG2177">
    <property type="taxonomic scope" value="Eukaryota"/>
</dbReference>
<dbReference type="InParanoid" id="Q5RKG6"/>
<dbReference type="OrthoDB" id="6105938at2759"/>
<dbReference type="PhylomeDB" id="Q5RKG6"/>
<dbReference type="UniPathway" id="UPA00143"/>
<dbReference type="PRO" id="PR:Q5RKG6"/>
<dbReference type="Proteomes" id="UP000002494">
    <property type="component" value="Unplaced"/>
</dbReference>
<dbReference type="GO" id="GO:0005737">
    <property type="term" value="C:cytoplasm"/>
    <property type="evidence" value="ECO:0000266"/>
    <property type="project" value="RGD"/>
</dbReference>
<dbReference type="GO" id="GO:0005634">
    <property type="term" value="C:nucleus"/>
    <property type="evidence" value="ECO:0000266"/>
    <property type="project" value="RGD"/>
</dbReference>
<dbReference type="GO" id="GO:0061630">
    <property type="term" value="F:ubiquitin protein ligase activity"/>
    <property type="evidence" value="ECO:0000318"/>
    <property type="project" value="GO_Central"/>
</dbReference>
<dbReference type="GO" id="GO:0008270">
    <property type="term" value="F:zinc ion binding"/>
    <property type="evidence" value="ECO:0007669"/>
    <property type="project" value="UniProtKB-KW"/>
</dbReference>
<dbReference type="GO" id="GO:0045087">
    <property type="term" value="P:innate immune response"/>
    <property type="evidence" value="ECO:0000266"/>
    <property type="project" value="RGD"/>
</dbReference>
<dbReference type="GO" id="GO:0033028">
    <property type="term" value="P:myeloid cell apoptotic process"/>
    <property type="evidence" value="ECO:0000266"/>
    <property type="project" value="RGD"/>
</dbReference>
<dbReference type="GO" id="GO:0008285">
    <property type="term" value="P:negative regulation of cell population proliferation"/>
    <property type="evidence" value="ECO:0000266"/>
    <property type="project" value="RGD"/>
</dbReference>
<dbReference type="GO" id="GO:0045930">
    <property type="term" value="P:negative regulation of mitotic cell cycle"/>
    <property type="evidence" value="ECO:0000266"/>
    <property type="project" value="RGD"/>
</dbReference>
<dbReference type="GO" id="GO:0043065">
    <property type="term" value="P:positive regulation of apoptotic process"/>
    <property type="evidence" value="ECO:0000266"/>
    <property type="project" value="RGD"/>
</dbReference>
<dbReference type="GO" id="GO:0033034">
    <property type="term" value="P:positive regulation of myeloid cell apoptotic process"/>
    <property type="evidence" value="ECO:0000266"/>
    <property type="project" value="RGD"/>
</dbReference>
<dbReference type="GO" id="GO:0016567">
    <property type="term" value="P:protein ubiquitination"/>
    <property type="evidence" value="ECO:0007669"/>
    <property type="project" value="UniProtKB-UniPathway"/>
</dbReference>
<dbReference type="GO" id="GO:0044790">
    <property type="term" value="P:suppression of viral release by host"/>
    <property type="evidence" value="ECO:0000266"/>
    <property type="project" value="RGD"/>
</dbReference>
<dbReference type="CDD" id="cd16599">
    <property type="entry name" value="RING-HC_TRIM35_C-IV"/>
    <property type="match status" value="1"/>
</dbReference>
<dbReference type="FunFam" id="2.60.120.920:FF:000036">
    <property type="entry name" value="Tripartite motif-containing protein 35"/>
    <property type="match status" value="1"/>
</dbReference>
<dbReference type="Gene3D" id="2.60.120.920">
    <property type="match status" value="1"/>
</dbReference>
<dbReference type="Gene3D" id="3.30.160.60">
    <property type="entry name" value="Classic Zinc Finger"/>
    <property type="match status" value="1"/>
</dbReference>
<dbReference type="Gene3D" id="3.30.40.10">
    <property type="entry name" value="Zinc/RING finger domain, C3HC4 (zinc finger)"/>
    <property type="match status" value="1"/>
</dbReference>
<dbReference type="InterPro" id="IPR001870">
    <property type="entry name" value="B30.2/SPRY"/>
</dbReference>
<dbReference type="InterPro" id="IPR043136">
    <property type="entry name" value="B30.2/SPRY_sf"/>
</dbReference>
<dbReference type="InterPro" id="IPR003879">
    <property type="entry name" value="Butyrophylin_SPRY"/>
</dbReference>
<dbReference type="InterPro" id="IPR013320">
    <property type="entry name" value="ConA-like_dom_sf"/>
</dbReference>
<dbReference type="InterPro" id="IPR006574">
    <property type="entry name" value="PRY"/>
</dbReference>
<dbReference type="InterPro" id="IPR003877">
    <property type="entry name" value="SPRY_dom"/>
</dbReference>
<dbReference type="InterPro" id="IPR050143">
    <property type="entry name" value="TRIM/RBCC"/>
</dbReference>
<dbReference type="InterPro" id="IPR027370">
    <property type="entry name" value="Znf-RING_euk"/>
</dbReference>
<dbReference type="InterPro" id="IPR000315">
    <property type="entry name" value="Znf_B-box"/>
</dbReference>
<dbReference type="InterPro" id="IPR001841">
    <property type="entry name" value="Znf_RING"/>
</dbReference>
<dbReference type="InterPro" id="IPR013083">
    <property type="entry name" value="Znf_RING/FYVE/PHD"/>
</dbReference>
<dbReference type="InterPro" id="IPR017907">
    <property type="entry name" value="Znf_RING_CS"/>
</dbReference>
<dbReference type="PANTHER" id="PTHR24103">
    <property type="entry name" value="E3 UBIQUITIN-PROTEIN LIGASE TRIM"/>
    <property type="match status" value="1"/>
</dbReference>
<dbReference type="Pfam" id="PF13765">
    <property type="entry name" value="PRY"/>
    <property type="match status" value="1"/>
</dbReference>
<dbReference type="Pfam" id="PF00622">
    <property type="entry name" value="SPRY"/>
    <property type="match status" value="1"/>
</dbReference>
<dbReference type="Pfam" id="PF00643">
    <property type="entry name" value="zf-B_box"/>
    <property type="match status" value="1"/>
</dbReference>
<dbReference type="Pfam" id="PF13445">
    <property type="entry name" value="zf-RING_UBOX"/>
    <property type="match status" value="1"/>
</dbReference>
<dbReference type="PRINTS" id="PR01407">
    <property type="entry name" value="BUTYPHLNCDUF"/>
</dbReference>
<dbReference type="SMART" id="SM00336">
    <property type="entry name" value="BBOX"/>
    <property type="match status" value="1"/>
</dbReference>
<dbReference type="SMART" id="SM00589">
    <property type="entry name" value="PRY"/>
    <property type="match status" value="1"/>
</dbReference>
<dbReference type="SMART" id="SM00184">
    <property type="entry name" value="RING"/>
    <property type="match status" value="1"/>
</dbReference>
<dbReference type="SMART" id="SM00449">
    <property type="entry name" value="SPRY"/>
    <property type="match status" value="1"/>
</dbReference>
<dbReference type="SUPFAM" id="SSF57845">
    <property type="entry name" value="B-box zinc-binding domain"/>
    <property type="match status" value="1"/>
</dbReference>
<dbReference type="SUPFAM" id="SSF49899">
    <property type="entry name" value="Concanavalin A-like lectins/glucanases"/>
    <property type="match status" value="1"/>
</dbReference>
<dbReference type="SUPFAM" id="SSF57850">
    <property type="entry name" value="RING/U-box"/>
    <property type="match status" value="1"/>
</dbReference>
<dbReference type="PROSITE" id="PS50188">
    <property type="entry name" value="B302_SPRY"/>
    <property type="match status" value="1"/>
</dbReference>
<dbReference type="PROSITE" id="PS50119">
    <property type="entry name" value="ZF_BBOX"/>
    <property type="match status" value="1"/>
</dbReference>
<dbReference type="PROSITE" id="PS00518">
    <property type="entry name" value="ZF_RING_1"/>
    <property type="match status" value="1"/>
</dbReference>
<dbReference type="PROSITE" id="PS50089">
    <property type="entry name" value="ZF_RING_2"/>
    <property type="match status" value="1"/>
</dbReference>
<feature type="chain" id="PRO_0000345147" description="E3 ubiquitin-protein ligase TRIM35">
    <location>
        <begin position="1"/>
        <end position="501"/>
    </location>
</feature>
<feature type="domain" description="B30.2/SPRY" evidence="7">
    <location>
        <begin position="284"/>
        <end position="495"/>
    </location>
</feature>
<feature type="zinc finger region" description="RING-type" evidence="6">
    <location>
        <begin position="21"/>
        <end position="61"/>
    </location>
</feature>
<feature type="zinc finger region" description="B box-type" evidence="5">
    <location>
        <begin position="96"/>
        <end position="137"/>
    </location>
</feature>
<feature type="coiled-coil region" evidence="4">
    <location>
        <begin position="209"/>
        <end position="252"/>
    </location>
</feature>
<feature type="binding site" evidence="5">
    <location>
        <position position="101"/>
    </location>
    <ligand>
        <name>Zn(2+)</name>
        <dbReference type="ChEBI" id="CHEBI:29105"/>
    </ligand>
</feature>
<feature type="binding site" evidence="5">
    <location>
        <position position="104"/>
    </location>
    <ligand>
        <name>Zn(2+)</name>
        <dbReference type="ChEBI" id="CHEBI:29105"/>
    </ligand>
</feature>
<feature type="binding site" evidence="5">
    <location>
        <position position="123"/>
    </location>
    <ligand>
        <name>Zn(2+)</name>
        <dbReference type="ChEBI" id="CHEBI:29105"/>
    </ligand>
</feature>
<feature type="binding site" evidence="5">
    <location>
        <position position="129"/>
    </location>
    <ligand>
        <name>Zn(2+)</name>
        <dbReference type="ChEBI" id="CHEBI:29105"/>
    </ligand>
</feature>
<feature type="modified residue" description="N-acetylmethionine" evidence="3">
    <location>
        <position position="1"/>
    </location>
</feature>
<feature type="modified residue" description="Phosphoserine" evidence="3">
    <location>
        <position position="8"/>
    </location>
</feature>
<protein>
    <recommendedName>
        <fullName>E3 ubiquitin-protein ligase TRIM35</fullName>
        <ecNumber>2.3.2.27</ecNumber>
    </recommendedName>
</protein>
<evidence type="ECO:0000250" key="1"/>
<evidence type="ECO:0000250" key="2">
    <source>
        <dbReference type="UniProtKB" id="Q8C006"/>
    </source>
</evidence>
<evidence type="ECO:0000250" key="3">
    <source>
        <dbReference type="UniProtKB" id="Q9UPQ4"/>
    </source>
</evidence>
<evidence type="ECO:0000255" key="4"/>
<evidence type="ECO:0000255" key="5">
    <source>
        <dbReference type="PROSITE-ProRule" id="PRU00024"/>
    </source>
</evidence>
<evidence type="ECO:0000255" key="6">
    <source>
        <dbReference type="PROSITE-ProRule" id="PRU00175"/>
    </source>
</evidence>
<evidence type="ECO:0000255" key="7">
    <source>
        <dbReference type="PROSITE-ProRule" id="PRU00548"/>
    </source>
</evidence>
<keyword id="KW-0007">Acetylation</keyword>
<keyword id="KW-0053">Apoptosis</keyword>
<keyword id="KW-0175">Coiled coil</keyword>
<keyword id="KW-0963">Cytoplasm</keyword>
<keyword id="KW-0479">Metal-binding</keyword>
<keyword id="KW-0539">Nucleus</keyword>
<keyword id="KW-0597">Phosphoprotein</keyword>
<keyword id="KW-1185">Reference proteome</keyword>
<keyword id="KW-0808">Transferase</keyword>
<keyword id="KW-0833">Ubl conjugation pathway</keyword>
<keyword id="KW-0862">Zinc</keyword>
<keyword id="KW-0863">Zinc-finger</keyword>
<reference key="1">
    <citation type="journal article" date="2004" name="Genome Res.">
        <title>The status, quality, and expansion of the NIH full-length cDNA project: the Mammalian Gene Collection (MGC).</title>
        <authorList>
            <consortium name="The MGC Project Team"/>
        </authorList>
    </citation>
    <scope>NUCLEOTIDE SEQUENCE [LARGE SCALE MRNA]</scope>
    <source>
        <tissue>Brain</tissue>
        <tissue>Kidney</tissue>
    </source>
</reference>
<name>TRI35_RAT</name>